<evidence type="ECO:0000250" key="1">
    <source>
        <dbReference type="UniProtKB" id="P57740"/>
    </source>
</evidence>
<evidence type="ECO:0000269" key="2">
    <source>
    </source>
</evidence>
<evidence type="ECO:0000305" key="3"/>
<evidence type="ECO:0007744" key="4">
    <source>
    </source>
</evidence>
<evidence type="ECO:0007744" key="5">
    <source>
    </source>
</evidence>
<reference key="1">
    <citation type="journal article" date="2005" name="Science">
        <title>The transcriptional landscape of the mammalian genome.</title>
        <authorList>
            <person name="Carninci P."/>
            <person name="Kasukawa T."/>
            <person name="Katayama S."/>
            <person name="Gough J."/>
            <person name="Frith M.C."/>
            <person name="Maeda N."/>
            <person name="Oyama R."/>
            <person name="Ravasi T."/>
            <person name="Lenhard B."/>
            <person name="Wells C."/>
            <person name="Kodzius R."/>
            <person name="Shimokawa K."/>
            <person name="Bajic V.B."/>
            <person name="Brenner S.E."/>
            <person name="Batalov S."/>
            <person name="Forrest A.R."/>
            <person name="Zavolan M."/>
            <person name="Davis M.J."/>
            <person name="Wilming L.G."/>
            <person name="Aidinis V."/>
            <person name="Allen J.E."/>
            <person name="Ambesi-Impiombato A."/>
            <person name="Apweiler R."/>
            <person name="Aturaliya R.N."/>
            <person name="Bailey T.L."/>
            <person name="Bansal M."/>
            <person name="Baxter L."/>
            <person name="Beisel K.W."/>
            <person name="Bersano T."/>
            <person name="Bono H."/>
            <person name="Chalk A.M."/>
            <person name="Chiu K.P."/>
            <person name="Choudhary V."/>
            <person name="Christoffels A."/>
            <person name="Clutterbuck D.R."/>
            <person name="Crowe M.L."/>
            <person name="Dalla E."/>
            <person name="Dalrymple B.P."/>
            <person name="de Bono B."/>
            <person name="Della Gatta G."/>
            <person name="di Bernardo D."/>
            <person name="Down T."/>
            <person name="Engstrom P."/>
            <person name="Fagiolini M."/>
            <person name="Faulkner G."/>
            <person name="Fletcher C.F."/>
            <person name="Fukushima T."/>
            <person name="Furuno M."/>
            <person name="Futaki S."/>
            <person name="Gariboldi M."/>
            <person name="Georgii-Hemming P."/>
            <person name="Gingeras T.R."/>
            <person name="Gojobori T."/>
            <person name="Green R.E."/>
            <person name="Gustincich S."/>
            <person name="Harbers M."/>
            <person name="Hayashi Y."/>
            <person name="Hensch T.K."/>
            <person name="Hirokawa N."/>
            <person name="Hill D."/>
            <person name="Huminiecki L."/>
            <person name="Iacono M."/>
            <person name="Ikeo K."/>
            <person name="Iwama A."/>
            <person name="Ishikawa T."/>
            <person name="Jakt M."/>
            <person name="Kanapin A."/>
            <person name="Katoh M."/>
            <person name="Kawasawa Y."/>
            <person name="Kelso J."/>
            <person name="Kitamura H."/>
            <person name="Kitano H."/>
            <person name="Kollias G."/>
            <person name="Krishnan S.P."/>
            <person name="Kruger A."/>
            <person name="Kummerfeld S.K."/>
            <person name="Kurochkin I.V."/>
            <person name="Lareau L.F."/>
            <person name="Lazarevic D."/>
            <person name="Lipovich L."/>
            <person name="Liu J."/>
            <person name="Liuni S."/>
            <person name="McWilliam S."/>
            <person name="Madan Babu M."/>
            <person name="Madera M."/>
            <person name="Marchionni L."/>
            <person name="Matsuda H."/>
            <person name="Matsuzawa S."/>
            <person name="Miki H."/>
            <person name="Mignone F."/>
            <person name="Miyake S."/>
            <person name="Morris K."/>
            <person name="Mottagui-Tabar S."/>
            <person name="Mulder N."/>
            <person name="Nakano N."/>
            <person name="Nakauchi H."/>
            <person name="Ng P."/>
            <person name="Nilsson R."/>
            <person name="Nishiguchi S."/>
            <person name="Nishikawa S."/>
            <person name="Nori F."/>
            <person name="Ohara O."/>
            <person name="Okazaki Y."/>
            <person name="Orlando V."/>
            <person name="Pang K.C."/>
            <person name="Pavan W.J."/>
            <person name="Pavesi G."/>
            <person name="Pesole G."/>
            <person name="Petrovsky N."/>
            <person name="Piazza S."/>
            <person name="Reed J."/>
            <person name="Reid J.F."/>
            <person name="Ring B.Z."/>
            <person name="Ringwald M."/>
            <person name="Rost B."/>
            <person name="Ruan Y."/>
            <person name="Salzberg S.L."/>
            <person name="Sandelin A."/>
            <person name="Schneider C."/>
            <person name="Schoenbach C."/>
            <person name="Sekiguchi K."/>
            <person name="Semple C.A."/>
            <person name="Seno S."/>
            <person name="Sessa L."/>
            <person name="Sheng Y."/>
            <person name="Shibata Y."/>
            <person name="Shimada H."/>
            <person name="Shimada K."/>
            <person name="Silva D."/>
            <person name="Sinclair B."/>
            <person name="Sperling S."/>
            <person name="Stupka E."/>
            <person name="Sugiura K."/>
            <person name="Sultana R."/>
            <person name="Takenaka Y."/>
            <person name="Taki K."/>
            <person name="Tammoja K."/>
            <person name="Tan S.L."/>
            <person name="Tang S."/>
            <person name="Taylor M.S."/>
            <person name="Tegner J."/>
            <person name="Teichmann S.A."/>
            <person name="Ueda H.R."/>
            <person name="van Nimwegen E."/>
            <person name="Verardo R."/>
            <person name="Wei C.L."/>
            <person name="Yagi K."/>
            <person name="Yamanishi H."/>
            <person name="Zabarovsky E."/>
            <person name="Zhu S."/>
            <person name="Zimmer A."/>
            <person name="Hide W."/>
            <person name="Bult C."/>
            <person name="Grimmond S.M."/>
            <person name="Teasdale R.D."/>
            <person name="Liu E.T."/>
            <person name="Brusic V."/>
            <person name="Quackenbush J."/>
            <person name="Wahlestedt C."/>
            <person name="Mattick J.S."/>
            <person name="Hume D.A."/>
            <person name="Kai C."/>
            <person name="Sasaki D."/>
            <person name="Tomaru Y."/>
            <person name="Fukuda S."/>
            <person name="Kanamori-Katayama M."/>
            <person name="Suzuki M."/>
            <person name="Aoki J."/>
            <person name="Arakawa T."/>
            <person name="Iida J."/>
            <person name="Imamura K."/>
            <person name="Itoh M."/>
            <person name="Kato T."/>
            <person name="Kawaji H."/>
            <person name="Kawagashira N."/>
            <person name="Kawashima T."/>
            <person name="Kojima M."/>
            <person name="Kondo S."/>
            <person name="Konno H."/>
            <person name="Nakano K."/>
            <person name="Ninomiya N."/>
            <person name="Nishio T."/>
            <person name="Okada M."/>
            <person name="Plessy C."/>
            <person name="Shibata K."/>
            <person name="Shiraki T."/>
            <person name="Suzuki S."/>
            <person name="Tagami M."/>
            <person name="Waki K."/>
            <person name="Watahiki A."/>
            <person name="Okamura-Oho Y."/>
            <person name="Suzuki H."/>
            <person name="Kawai J."/>
            <person name="Hayashizaki Y."/>
        </authorList>
    </citation>
    <scope>NUCLEOTIDE SEQUENCE [LARGE SCALE MRNA]</scope>
    <source>
        <strain>NOD</strain>
        <tissue>Thymus</tissue>
    </source>
</reference>
<reference key="2">
    <citation type="journal article" date="2004" name="Genome Res.">
        <title>The status, quality, and expansion of the NIH full-length cDNA project: the Mammalian Gene Collection (MGC).</title>
        <authorList>
            <consortium name="The MGC Project Team"/>
        </authorList>
    </citation>
    <scope>NUCLEOTIDE SEQUENCE [LARGE SCALE MRNA]</scope>
    <source>
        <strain>C57BL/6J</strain>
    </source>
</reference>
<reference key="3">
    <citation type="journal article" date="2010" name="Cell">
        <title>A tissue-specific atlas of mouse protein phosphorylation and expression.</title>
        <authorList>
            <person name="Huttlin E.L."/>
            <person name="Jedrychowski M.P."/>
            <person name="Elias J.E."/>
            <person name="Goswami T."/>
            <person name="Rad R."/>
            <person name="Beausoleil S.A."/>
            <person name="Villen J."/>
            <person name="Haas W."/>
            <person name="Sowa M.E."/>
            <person name="Gygi S.P."/>
        </authorList>
    </citation>
    <scope>PHOSPHORYLATION [LARGE SCALE ANALYSIS] AT SER-11</scope>
    <scope>IDENTIFICATION BY MASS SPECTROMETRY [LARGE SCALE ANALYSIS]</scope>
    <source>
        <tissue>Brain</tissue>
        <tissue>Kidney</tissue>
        <tissue>Lung</tissue>
        <tissue>Spleen</tissue>
        <tissue>Testis</tissue>
    </source>
</reference>
<reference key="4">
    <citation type="journal article" date="2014" name="Mol. Cell. Proteomics">
        <title>Immunoaffinity enrichment and mass spectrometry analysis of protein methylation.</title>
        <authorList>
            <person name="Guo A."/>
            <person name="Gu H."/>
            <person name="Zhou J."/>
            <person name="Mulhern D."/>
            <person name="Wang Y."/>
            <person name="Lee K.A."/>
            <person name="Yang V."/>
            <person name="Aguiar M."/>
            <person name="Kornhauser J."/>
            <person name="Jia X."/>
            <person name="Ren J."/>
            <person name="Beausoleil S.A."/>
            <person name="Silva J.C."/>
            <person name="Vemulapalli V."/>
            <person name="Bedford M.T."/>
            <person name="Comb M.J."/>
        </authorList>
    </citation>
    <scope>METHYLATION [LARGE SCALE ANALYSIS] AT ARG-60 AND ARG-69</scope>
    <scope>IDENTIFICATION BY MASS SPECTROMETRY [LARGE SCALE ANALYSIS]</scope>
    <source>
        <tissue>Brain</tissue>
        <tissue>Embryo</tissue>
    </source>
</reference>
<reference key="5">
    <citation type="journal article" date="2017" name="Elife">
        <title>Suppression of C9orf72 RNA repeat-induced neurotoxicity by the ALS-associated RNA-binding protein Zfp106.</title>
        <authorList>
            <person name="Celona B."/>
            <person name="Dollen J.V."/>
            <person name="Vatsavayai S.C."/>
            <person name="Kashima R."/>
            <person name="Johnson J.R."/>
            <person name="Tang A.A."/>
            <person name="Hata A."/>
            <person name="Miller B.L."/>
            <person name="Huang E.J."/>
            <person name="Krogan N.J."/>
            <person name="Seeley W.W."/>
            <person name="Black B.L."/>
        </authorList>
    </citation>
    <scope>INTERACTION WITH ZNF106</scope>
    <scope>IDENTIFICATION BY MASS SPECTROMETRY</scope>
</reference>
<comment type="function">
    <text evidence="1">Plays a role in the nuclear pore complex (NPC) assembly and/or maintenance. Required for the assembly of peripheral proteins into the NPC. May anchor NUP62 to the NPC. Involved in nephrogenesis.</text>
</comment>
<comment type="subunit">
    <text evidence="1 2">Part of the nuclear pore complex (NPC) (By similarity). Forms part of the Nup160 subcomplex in the nuclear pore which is composed of NUP160, NUP133, NUP107 and Nup96; this complex plays a role in RNA export and in tethering Nup98 and NUP153 to the nucleus (By similarity). Does not interact with TPR (By similarity). Interacts with ZNF106 (PubMed:28072389).</text>
</comment>
<comment type="subcellular location">
    <subcellularLocation>
        <location evidence="1">Nucleus membrane</location>
    </subcellularLocation>
    <subcellularLocation>
        <location evidence="1">Nucleus</location>
        <location evidence="1">Nuclear pore complex</location>
    </subcellularLocation>
    <subcellularLocation>
        <location evidence="1">Chromosome</location>
        <location evidence="1">Centromere</location>
        <location evidence="1">Kinetochore</location>
    </subcellularLocation>
    <text evidence="1">Located on both the cytoplasmic and nuclear sides of the NPC core structure. During mitosis, localizes to the kinetochores. Dissociates from the dissasembled NPC structure late during prophase of mitosis.</text>
</comment>
<comment type="similarity">
    <text evidence="3">Belongs to the nucleoporin Nup84/Nup107 family.</text>
</comment>
<feature type="chain" id="PRO_0000204832" description="Nuclear pore complex protein Nup107">
    <location>
        <begin position="1"/>
        <end position="926"/>
    </location>
</feature>
<feature type="modified residue" description="N-acetylmethionine" evidence="1">
    <location>
        <position position="1"/>
    </location>
</feature>
<feature type="modified residue" description="Phosphoserine" evidence="1">
    <location>
        <position position="4"/>
    </location>
</feature>
<feature type="modified residue" description="Phosphoserine" evidence="1">
    <location>
        <position position="10"/>
    </location>
</feature>
<feature type="modified residue" description="Phosphoserine" evidence="4">
    <location>
        <position position="11"/>
    </location>
</feature>
<feature type="modified residue" description="Phosphothreonine" evidence="1">
    <location>
        <position position="46"/>
    </location>
</feature>
<feature type="modified residue" description="Phosphothreonine" evidence="1">
    <location>
        <position position="55"/>
    </location>
</feature>
<feature type="modified residue" description="Phosphoserine" evidence="1">
    <location>
        <position position="57"/>
    </location>
</feature>
<feature type="modified residue" description="Phosphoserine" evidence="1">
    <location>
        <position position="58"/>
    </location>
</feature>
<feature type="modified residue" description="Asymmetric dimethylarginine; alternate" evidence="5">
    <location>
        <position position="60"/>
    </location>
</feature>
<feature type="modified residue" description="Omega-N-methylarginine; alternate" evidence="5">
    <location>
        <position position="60"/>
    </location>
</feature>
<feature type="modified residue" description="Phosphothreonine" evidence="1">
    <location>
        <position position="65"/>
    </location>
</feature>
<feature type="modified residue" description="Omega-N-methylarginine" evidence="5">
    <location>
        <position position="69"/>
    </location>
</feature>
<feature type="modified residue" description="Phosphoserine" evidence="1">
    <location>
        <position position="70"/>
    </location>
</feature>
<feature type="modified residue" description="Phosphoserine" evidence="1">
    <location>
        <position position="87"/>
    </location>
</feature>
<proteinExistence type="evidence at protein level"/>
<gene>
    <name type="primary">Nup107</name>
</gene>
<sequence length="926" mass="106717">MDRSGFGGMSSPVIRDAEVTRTARKHSAHKRVLIQANQEDNFGTATPRSQIIPRTPSSFRQPFVTPSSRSLLRHPDISYILGTEGRSPRHTQSSGYLGNLSMVTNLDDSNWAAAFSSQRLGLYTNTEHHSMTEDVNLSTVMLREDDPGEAASMSMFSDFLHSFLKHSSTTVFDLVEEYENICGSQVNILSKIVSRATPGLQKFSKTASMLWLLQQEMVTWRLLASLYRDRIQSSLEEENMFAIAGINASEKMVVETLFQRDSLVRQSQLVVDWLESIAKDEIGEFSDNIEFYAKSVYWENTLHSLKQRQLLSHMGSTRPLVTELDPDAPIRQKLPLDDLDREDEVRLLKYLFTLIRAGMTEEAQRLCKRCGQAWRAATLEGWKLYHDPNVNGGTELEPVEGNPYRRIWKISCWRMAEDELFNKYERAIYAALSGNLKQLLPVCDTWEDTVWAYFRVMVDSLVEQEIRTSVMTQDDSEELPREYMEANWTLEKVFEELQATDKKRVLEENQEHYHIVQKFLILGDVDGLMDEFSKWLSKSGSSLPGHLLRFMTHLILFLRTLGLQTKEEVSIEVLKTYIQLLISEKHTSLIAFYTCHLPQDLAVAQYALFLEGVTEFEQRHQCLELAKEADLDVATITKTVVENICKKDNGEFSHHDLAPSLDTGTTEEDRLKIDVIDWLVFDPAQRAEALRQGNAIMRKFLALKKHEAAKEVFVKIPQDSIAEIYNQWEEQGMESPLPAEDDNAIREHLCIRAYLEAHETFNEWFKHMNSAPQKPTLLSQATFTEKVAYEHREKKYEMDHNIWKGHLDALTADVKEKMYNVLLFVDGGWMVDVREDAEDDPERTHQMVLLRKLCLPMLCFLLHTILHSTGQYQECLQLADMVSSERHKLYLVFSKEELRKLLQKLRESSLMLLDQGLDPLGYEIQS</sequence>
<keyword id="KW-0007">Acetylation</keyword>
<keyword id="KW-0137">Centromere</keyword>
<keyword id="KW-0158">Chromosome</keyword>
<keyword id="KW-0995">Kinetochore</keyword>
<keyword id="KW-0472">Membrane</keyword>
<keyword id="KW-0488">Methylation</keyword>
<keyword id="KW-0509">mRNA transport</keyword>
<keyword id="KW-0906">Nuclear pore complex</keyword>
<keyword id="KW-0539">Nucleus</keyword>
<keyword id="KW-0597">Phosphoprotein</keyword>
<keyword id="KW-0653">Protein transport</keyword>
<keyword id="KW-1185">Reference proteome</keyword>
<keyword id="KW-0811">Translocation</keyword>
<keyword id="KW-0813">Transport</keyword>
<name>NU107_MOUSE</name>
<accession>Q8BH74</accession>
<accession>Q99KH5</accession>
<protein>
    <recommendedName>
        <fullName>Nuclear pore complex protein Nup107</fullName>
    </recommendedName>
    <alternativeName>
        <fullName>107 kDa nucleoporin</fullName>
    </alternativeName>
    <alternativeName>
        <fullName>Nucleoporin Nup107</fullName>
    </alternativeName>
</protein>
<dbReference type="EMBL" id="AK088069">
    <property type="protein sequence ID" value="BAC40127.1"/>
    <property type="molecule type" value="mRNA"/>
</dbReference>
<dbReference type="EMBL" id="AK088303">
    <property type="protein sequence ID" value="BAC40270.1"/>
    <property type="molecule type" value="mRNA"/>
</dbReference>
<dbReference type="EMBL" id="AK088625">
    <property type="protein sequence ID" value="BAC40461.1"/>
    <property type="molecule type" value="mRNA"/>
</dbReference>
<dbReference type="EMBL" id="BC004655">
    <property type="protein sequence ID" value="AAH04655.1"/>
    <property type="molecule type" value="mRNA"/>
</dbReference>
<dbReference type="EMBL" id="BC057591">
    <property type="protein sequence ID" value="AAH57591.1"/>
    <property type="molecule type" value="mRNA"/>
</dbReference>
<dbReference type="CCDS" id="CCDS36068.1"/>
<dbReference type="RefSeq" id="NP_598771.1">
    <property type="nucleotide sequence ID" value="NM_134010.3"/>
</dbReference>
<dbReference type="SMR" id="Q8BH74"/>
<dbReference type="BioGRID" id="222088">
    <property type="interactions" value="72"/>
</dbReference>
<dbReference type="ComplexPortal" id="CPX-4474">
    <property type="entry name" value="Nuclear pore complex"/>
</dbReference>
<dbReference type="FunCoup" id="Q8BH74">
    <property type="interactions" value="3230"/>
</dbReference>
<dbReference type="IntAct" id="Q8BH74">
    <property type="interactions" value="54"/>
</dbReference>
<dbReference type="MINT" id="Q8BH74"/>
<dbReference type="STRING" id="10090.ENSMUSP00000063590"/>
<dbReference type="GlyGen" id="Q8BH74">
    <property type="glycosylation" value="3 sites, 1 O-linked glycan (1 site)"/>
</dbReference>
<dbReference type="iPTMnet" id="Q8BH74"/>
<dbReference type="PhosphoSitePlus" id="Q8BH74"/>
<dbReference type="SwissPalm" id="Q8BH74"/>
<dbReference type="jPOST" id="Q8BH74"/>
<dbReference type="PaxDb" id="10090-ENSMUSP00000063590"/>
<dbReference type="PeptideAtlas" id="Q8BH74"/>
<dbReference type="ProteomicsDB" id="291920"/>
<dbReference type="Pumba" id="Q8BH74"/>
<dbReference type="Antibodypedia" id="16892">
    <property type="antibodies" value="238 antibodies from 35 providers"/>
</dbReference>
<dbReference type="DNASU" id="103468"/>
<dbReference type="Ensembl" id="ENSMUST00000064848.7">
    <property type="protein sequence ID" value="ENSMUSP00000063590.6"/>
    <property type="gene ID" value="ENSMUSG00000052798.15"/>
</dbReference>
<dbReference type="GeneID" id="103468"/>
<dbReference type="KEGG" id="mmu:103468"/>
<dbReference type="UCSC" id="uc007hdo.1">
    <property type="organism name" value="mouse"/>
</dbReference>
<dbReference type="AGR" id="MGI:2143854"/>
<dbReference type="CTD" id="57122"/>
<dbReference type="MGI" id="MGI:2143854">
    <property type="gene designation" value="Nup107"/>
</dbReference>
<dbReference type="VEuPathDB" id="HostDB:ENSMUSG00000052798"/>
<dbReference type="eggNOG" id="KOG1964">
    <property type="taxonomic scope" value="Eukaryota"/>
</dbReference>
<dbReference type="GeneTree" id="ENSGT00390000012080"/>
<dbReference type="InParanoid" id="Q8BH74"/>
<dbReference type="OMA" id="MAHIVLF"/>
<dbReference type="OrthoDB" id="3098at2759"/>
<dbReference type="PhylomeDB" id="Q8BH74"/>
<dbReference type="TreeFam" id="TF324259"/>
<dbReference type="Reactome" id="R-MMU-141444">
    <property type="pathway name" value="Amplification of signal from unattached kinetochores via a MAD2 inhibitory signal"/>
</dbReference>
<dbReference type="Reactome" id="R-MMU-159227">
    <property type="pathway name" value="Transport of the SLBP independent Mature mRNA"/>
</dbReference>
<dbReference type="Reactome" id="R-MMU-159230">
    <property type="pathway name" value="Transport of the SLBP Dependant Mature mRNA"/>
</dbReference>
<dbReference type="Reactome" id="R-MMU-159231">
    <property type="pathway name" value="Transport of Mature mRNA Derived from an Intronless Transcript"/>
</dbReference>
<dbReference type="Reactome" id="R-MMU-159236">
    <property type="pathway name" value="Transport of Mature mRNA derived from an Intron-Containing Transcript"/>
</dbReference>
<dbReference type="Reactome" id="R-MMU-170822">
    <property type="pathway name" value="Regulation of Glucokinase by Glucokinase Regulatory Protein"/>
</dbReference>
<dbReference type="Reactome" id="R-MMU-191859">
    <property type="pathway name" value="snRNP Assembly"/>
</dbReference>
<dbReference type="Reactome" id="R-MMU-2467813">
    <property type="pathway name" value="Separation of Sister Chromatids"/>
</dbReference>
<dbReference type="Reactome" id="R-MMU-2500257">
    <property type="pathway name" value="Resolution of Sister Chromatid Cohesion"/>
</dbReference>
<dbReference type="Reactome" id="R-MMU-3108214">
    <property type="pathway name" value="SUMOylation of DNA damage response and repair proteins"/>
</dbReference>
<dbReference type="Reactome" id="R-MMU-3232142">
    <property type="pathway name" value="SUMOylation of ubiquitinylation proteins"/>
</dbReference>
<dbReference type="Reactome" id="R-MMU-3301854">
    <property type="pathway name" value="Nuclear Pore Complex (NPC) Disassembly"/>
</dbReference>
<dbReference type="Reactome" id="R-MMU-3371453">
    <property type="pathway name" value="Regulation of HSF1-mediated heat shock response"/>
</dbReference>
<dbReference type="Reactome" id="R-MMU-4085377">
    <property type="pathway name" value="SUMOylation of SUMOylation proteins"/>
</dbReference>
<dbReference type="Reactome" id="R-MMU-4551638">
    <property type="pathway name" value="SUMOylation of chromatin organization proteins"/>
</dbReference>
<dbReference type="Reactome" id="R-MMU-4570464">
    <property type="pathway name" value="SUMOylation of RNA binding proteins"/>
</dbReference>
<dbReference type="Reactome" id="R-MMU-4615885">
    <property type="pathway name" value="SUMOylation of DNA replication proteins"/>
</dbReference>
<dbReference type="Reactome" id="R-MMU-5578749">
    <property type="pathway name" value="Transcriptional regulation by small RNAs"/>
</dbReference>
<dbReference type="Reactome" id="R-MMU-5663220">
    <property type="pathway name" value="RHO GTPases Activate Formins"/>
</dbReference>
<dbReference type="Reactome" id="R-MMU-68877">
    <property type="pathway name" value="Mitotic Prometaphase"/>
</dbReference>
<dbReference type="Reactome" id="R-MMU-9615933">
    <property type="pathway name" value="Postmitotic nuclear pore complex (NPC) reformation"/>
</dbReference>
<dbReference type="Reactome" id="R-MMU-9648025">
    <property type="pathway name" value="EML4 and NUDC in mitotic spindle formation"/>
</dbReference>
<dbReference type="BioGRID-ORCS" id="103468">
    <property type="hits" value="27 hits in 78 CRISPR screens"/>
</dbReference>
<dbReference type="ChiTaRS" id="Nup107">
    <property type="organism name" value="mouse"/>
</dbReference>
<dbReference type="PRO" id="PR:Q8BH74"/>
<dbReference type="Proteomes" id="UP000000589">
    <property type="component" value="Chromosome 10"/>
</dbReference>
<dbReference type="RNAct" id="Q8BH74">
    <property type="molecule type" value="protein"/>
</dbReference>
<dbReference type="Bgee" id="ENSMUSG00000052798">
    <property type="expression patterns" value="Expressed in primitive streak and 243 other cell types or tissues"/>
</dbReference>
<dbReference type="ExpressionAtlas" id="Q8BH74">
    <property type="expression patterns" value="baseline and differential"/>
</dbReference>
<dbReference type="GO" id="GO:0000776">
    <property type="term" value="C:kinetochore"/>
    <property type="evidence" value="ECO:0007669"/>
    <property type="project" value="UniProtKB-KW"/>
</dbReference>
<dbReference type="GO" id="GO:0005635">
    <property type="term" value="C:nuclear envelope"/>
    <property type="evidence" value="ECO:0000266"/>
    <property type="project" value="ComplexPortal"/>
</dbReference>
<dbReference type="GO" id="GO:0031965">
    <property type="term" value="C:nuclear membrane"/>
    <property type="evidence" value="ECO:0000250"/>
    <property type="project" value="UniProtKB"/>
</dbReference>
<dbReference type="GO" id="GO:0034399">
    <property type="term" value="C:nuclear periphery"/>
    <property type="evidence" value="ECO:0000250"/>
    <property type="project" value="UniProtKB"/>
</dbReference>
<dbReference type="GO" id="GO:0005643">
    <property type="term" value="C:nuclear pore"/>
    <property type="evidence" value="ECO:0000250"/>
    <property type="project" value="UniProtKB"/>
</dbReference>
<dbReference type="GO" id="GO:0031080">
    <property type="term" value="C:nuclear pore outer ring"/>
    <property type="evidence" value="ECO:0000250"/>
    <property type="project" value="UniProtKB"/>
</dbReference>
<dbReference type="GO" id="GO:0017056">
    <property type="term" value="F:structural constituent of nuclear pore"/>
    <property type="evidence" value="ECO:0000250"/>
    <property type="project" value="UniProtKB"/>
</dbReference>
<dbReference type="GO" id="GO:0008585">
    <property type="term" value="P:female gonad development"/>
    <property type="evidence" value="ECO:0007669"/>
    <property type="project" value="Ensembl"/>
</dbReference>
<dbReference type="GO" id="GO:0006406">
    <property type="term" value="P:mRNA export from nucleus"/>
    <property type="evidence" value="ECO:0007669"/>
    <property type="project" value="Ensembl"/>
</dbReference>
<dbReference type="GO" id="GO:0072006">
    <property type="term" value="P:nephron development"/>
    <property type="evidence" value="ECO:0000250"/>
    <property type="project" value="UniProtKB"/>
</dbReference>
<dbReference type="GO" id="GO:0051292">
    <property type="term" value="P:nuclear pore complex assembly"/>
    <property type="evidence" value="ECO:0000250"/>
    <property type="project" value="UniProtKB"/>
</dbReference>
<dbReference type="GO" id="GO:0006913">
    <property type="term" value="P:nucleocytoplasmic transport"/>
    <property type="evidence" value="ECO:0000303"/>
    <property type="project" value="ComplexPortal"/>
</dbReference>
<dbReference type="GO" id="GO:0015031">
    <property type="term" value="P:protein transport"/>
    <property type="evidence" value="ECO:0007669"/>
    <property type="project" value="UniProtKB-KW"/>
</dbReference>
<dbReference type="FunFam" id="1.10.3450.20:FF:000001">
    <property type="entry name" value="Nuclear pore complex protein"/>
    <property type="match status" value="1"/>
</dbReference>
<dbReference type="FunFam" id="1.20.190.50:FF:000001">
    <property type="entry name" value="Nuclear pore complex protein"/>
    <property type="match status" value="1"/>
</dbReference>
<dbReference type="Gene3D" id="1.10.3450.20">
    <property type="match status" value="1"/>
</dbReference>
<dbReference type="Gene3D" id="1.20.190.50">
    <property type="match status" value="1"/>
</dbReference>
<dbReference type="InterPro" id="IPR007252">
    <property type="entry name" value="Nup84/Nup107"/>
</dbReference>
<dbReference type="PANTHER" id="PTHR13003:SF2">
    <property type="entry name" value="NUCLEAR PORE COMPLEX PROTEIN NUP107"/>
    <property type="match status" value="1"/>
</dbReference>
<dbReference type="PANTHER" id="PTHR13003">
    <property type="entry name" value="NUP107-RELATED"/>
    <property type="match status" value="1"/>
</dbReference>
<dbReference type="Pfam" id="PF04121">
    <property type="entry name" value="Nup84_Nup100"/>
    <property type="match status" value="1"/>
</dbReference>
<organism>
    <name type="scientific">Mus musculus</name>
    <name type="common">Mouse</name>
    <dbReference type="NCBI Taxonomy" id="10090"/>
    <lineage>
        <taxon>Eukaryota</taxon>
        <taxon>Metazoa</taxon>
        <taxon>Chordata</taxon>
        <taxon>Craniata</taxon>
        <taxon>Vertebrata</taxon>
        <taxon>Euteleostomi</taxon>
        <taxon>Mammalia</taxon>
        <taxon>Eutheria</taxon>
        <taxon>Euarchontoglires</taxon>
        <taxon>Glires</taxon>
        <taxon>Rodentia</taxon>
        <taxon>Myomorpha</taxon>
        <taxon>Muroidea</taxon>
        <taxon>Muridae</taxon>
        <taxon>Murinae</taxon>
        <taxon>Mus</taxon>
        <taxon>Mus</taxon>
    </lineage>
</organism>